<comment type="function">
    <text evidence="1">DNA-dependent RNA polymerase catalyzes the transcription of DNA into RNA using the four ribonucleoside triphosphates as substrates.</text>
</comment>
<comment type="catalytic activity">
    <reaction evidence="1">
        <text>RNA(n) + a ribonucleoside 5'-triphosphate = RNA(n+1) + diphosphate</text>
        <dbReference type="Rhea" id="RHEA:21248"/>
        <dbReference type="Rhea" id="RHEA-COMP:14527"/>
        <dbReference type="Rhea" id="RHEA-COMP:17342"/>
        <dbReference type="ChEBI" id="CHEBI:33019"/>
        <dbReference type="ChEBI" id="CHEBI:61557"/>
        <dbReference type="ChEBI" id="CHEBI:140395"/>
        <dbReference type="EC" id="2.7.7.6"/>
    </reaction>
</comment>
<comment type="subunit">
    <text evidence="1">The RNAP catalytic core consists of 2 alpha, 1 beta, 1 beta' and 1 omega subunit. When a sigma factor is associated with the core the holoenzyme is formed, which can initiate transcription.</text>
</comment>
<comment type="similarity">
    <text evidence="1">Belongs to the RNA polymerase beta chain family.</text>
</comment>
<sequence length="1375" mass="154037">MGQLTKKFGKIEVTLPIPHLLNLQVDSYKKFLQEGAAALAPDEGLEGVFRSVFPIEDFNRTASLEYVSYEIGEPKYDQAECISKGLTYEAPIRIKVRLVVYDVDEDSENRTIRDIKEQDIYFGTLPLMTEKGTFIINGTERVIVNQLQRSPGIIFEHDAGKTHSSRKVLYSCRVIPMRGSWLDFDYDHKDILYVRIDRRRKMPATILFKAMGMSRSDILEYFYKKEYYTLEDDGRLMWELDKDLYRKDVAYADVADGEGKVIAKAGKPYTKRSWRLMLEAGIPAVEVAPDYIAGMFLAEDIVDEATGEVLAEAADEITLDLIDRLRECSIKRVPVLHTKGSDTSSSIRDTLLLDKTADQEQARVEIYRRLRPSSPPTPEIASTFFENLFRNPDYYDLSPVGRYKLNQRLGLTTTQERVLTDEDILTAIRVLNHLKDTHGPADDIDHLGNRRVRPVGELVENQYRIGLVRMERAIKERMSLQEVSTLMPHDLINPKPVQAVLKEFFGTSQLSQFMDQTNALSEVTHKRRLSALGPGGLTRERAGFEVRDVHTSHYGRICPIETPEGPNIGLIVSLTTYAKVNDFGFIETPYRVVRDGQVTDEVKYLDASSEHGEVVAQANARLDGDHRFVDEFVTTRVRGDVIMSPREEVTLMDISPSQMVSISAALIPFLEHDDANRALMGSNMQRQAVPLLRSTKPIVGTGMEADVARDSGACIIAEADGVVRYADADRIVVSYEGDLYPRTGGVRSYDLQKYHKSNQSSCFGQKPLVSRGQVIRKGDVLADGPGIEDGELALGKNLVVAFMPWCGYNFEDSILISERCVKEDVFTSVHIEEFEVVARDTKLGPEEITRDIPNVGEDMLRNLDGSGIIRIGANVKPDDILVGKITPKGETQLTPEEKLLRAIFGEKARDVKNTSLKVPPGIEGTVIDVKLFNRRSGEKDERTRNIEDYELARLDQKEKDHIRALTETTREKLAPVVVGKQLAYGLAGQKKGEVIAEAGQTLTAEMLEGLPVKKLSGLFKSKDTNEAVQQALESYDRQIEFINAMYESKREKVTEGDDLPPGVIKMAKVHIAVKRKLNVGDKMAGRHGNKGVVSCILPQEDMPFFADGRPVDIVLNPLGVPSRMNIGQIMETHLGWAAKEMGRKLALMLEHGQDLASVREQVKTVFASDAISSEVDNMDDETFVRSVRRLRDGIVTKTPVFDGATEEQIWSWMEQAGLANDGKTELYDGRTGVRFHNRVTTGVMYILKLHHLVDEKIHARSTGPYSLVTQQPLGGKAQFGGQRLGEMEVWALEAYGAAYLLQEFLTVKSDDVTGRVKMYEKVVKGDNFLEAGLPESFNVLVKELMSLGLDVTLHQEEGKKRTKRAGMTFGDGTSY</sequence>
<accession>Q30X05</accession>
<reference key="1">
    <citation type="journal article" date="2011" name="J. Bacteriol.">
        <title>Complete genome sequence and updated annotation of Desulfovibrio alaskensis G20.</title>
        <authorList>
            <person name="Hauser L.J."/>
            <person name="Land M.L."/>
            <person name="Brown S.D."/>
            <person name="Larimer F."/>
            <person name="Keller K.L."/>
            <person name="Rapp-Giles B.J."/>
            <person name="Price M.N."/>
            <person name="Lin M."/>
            <person name="Bruce D.C."/>
            <person name="Detter J.C."/>
            <person name="Tapia R."/>
            <person name="Han C.S."/>
            <person name="Goodwin L.A."/>
            <person name="Cheng J.F."/>
            <person name="Pitluck S."/>
            <person name="Copeland A."/>
            <person name="Lucas S."/>
            <person name="Nolan M."/>
            <person name="Lapidus A.L."/>
            <person name="Palumbo A.V."/>
            <person name="Wall J.D."/>
        </authorList>
    </citation>
    <scope>NUCLEOTIDE SEQUENCE [LARGE SCALE GENOMIC DNA]</scope>
    <source>
        <strain>ATCC BAA-1058 / DSM 17464 / G20</strain>
    </source>
</reference>
<feature type="chain" id="PRO_0000224052" description="DNA-directed RNA polymerase subunit beta">
    <location>
        <begin position="1"/>
        <end position="1375"/>
    </location>
</feature>
<keyword id="KW-0240">DNA-directed RNA polymerase</keyword>
<keyword id="KW-0548">Nucleotidyltransferase</keyword>
<keyword id="KW-1185">Reference proteome</keyword>
<keyword id="KW-0804">Transcription</keyword>
<keyword id="KW-0808">Transferase</keyword>
<proteinExistence type="inferred from homology"/>
<organism>
    <name type="scientific">Oleidesulfovibrio alaskensis (strain ATCC BAA-1058 / DSM 17464 / G20)</name>
    <name type="common">Desulfovibrio alaskensis</name>
    <dbReference type="NCBI Taxonomy" id="207559"/>
    <lineage>
        <taxon>Bacteria</taxon>
        <taxon>Pseudomonadati</taxon>
        <taxon>Thermodesulfobacteriota</taxon>
        <taxon>Desulfovibrionia</taxon>
        <taxon>Desulfovibrionales</taxon>
        <taxon>Desulfovibrionaceae</taxon>
        <taxon>Oleidesulfovibrio</taxon>
    </lineage>
</organism>
<protein>
    <recommendedName>
        <fullName evidence="1">DNA-directed RNA polymerase subunit beta</fullName>
        <shortName evidence="1">RNAP subunit beta</shortName>
        <ecNumber evidence="1">2.7.7.6</ecNumber>
    </recommendedName>
    <alternativeName>
        <fullName evidence="1">RNA polymerase subunit beta</fullName>
    </alternativeName>
    <alternativeName>
        <fullName evidence="1">Transcriptase subunit beta</fullName>
    </alternativeName>
</protein>
<evidence type="ECO:0000255" key="1">
    <source>
        <dbReference type="HAMAP-Rule" id="MF_01321"/>
    </source>
</evidence>
<name>RPOB_OLEA2</name>
<dbReference type="EC" id="2.7.7.6" evidence="1"/>
<dbReference type="EMBL" id="CP000112">
    <property type="protein sequence ID" value="ABB39791.1"/>
    <property type="molecule type" value="Genomic_DNA"/>
</dbReference>
<dbReference type="RefSeq" id="WP_011368764.1">
    <property type="nucleotide sequence ID" value="NC_007519.1"/>
</dbReference>
<dbReference type="SMR" id="Q30X05"/>
<dbReference type="STRING" id="207559.Dde_2997"/>
<dbReference type="KEGG" id="dde:Dde_2997"/>
<dbReference type="eggNOG" id="COG0085">
    <property type="taxonomic scope" value="Bacteria"/>
</dbReference>
<dbReference type="HOGENOM" id="CLU_000524_4_0_7"/>
<dbReference type="Proteomes" id="UP000002710">
    <property type="component" value="Chromosome"/>
</dbReference>
<dbReference type="GO" id="GO:0000428">
    <property type="term" value="C:DNA-directed RNA polymerase complex"/>
    <property type="evidence" value="ECO:0007669"/>
    <property type="project" value="UniProtKB-KW"/>
</dbReference>
<dbReference type="GO" id="GO:0003677">
    <property type="term" value="F:DNA binding"/>
    <property type="evidence" value="ECO:0007669"/>
    <property type="project" value="UniProtKB-UniRule"/>
</dbReference>
<dbReference type="GO" id="GO:0003899">
    <property type="term" value="F:DNA-directed RNA polymerase activity"/>
    <property type="evidence" value="ECO:0007669"/>
    <property type="project" value="UniProtKB-UniRule"/>
</dbReference>
<dbReference type="GO" id="GO:0032549">
    <property type="term" value="F:ribonucleoside binding"/>
    <property type="evidence" value="ECO:0007669"/>
    <property type="project" value="InterPro"/>
</dbReference>
<dbReference type="GO" id="GO:0006351">
    <property type="term" value="P:DNA-templated transcription"/>
    <property type="evidence" value="ECO:0007669"/>
    <property type="project" value="UniProtKB-UniRule"/>
</dbReference>
<dbReference type="CDD" id="cd00653">
    <property type="entry name" value="RNA_pol_B_RPB2"/>
    <property type="match status" value="1"/>
</dbReference>
<dbReference type="FunFam" id="3.90.1800.10:FF:000001">
    <property type="entry name" value="DNA-directed RNA polymerase subunit beta"/>
    <property type="match status" value="1"/>
</dbReference>
<dbReference type="Gene3D" id="2.40.50.100">
    <property type="match status" value="1"/>
</dbReference>
<dbReference type="Gene3D" id="2.40.50.150">
    <property type="match status" value="1"/>
</dbReference>
<dbReference type="Gene3D" id="3.90.1100.10">
    <property type="match status" value="2"/>
</dbReference>
<dbReference type="Gene3D" id="2.30.150.10">
    <property type="entry name" value="DNA-directed RNA polymerase, beta subunit, external 1 domain"/>
    <property type="match status" value="1"/>
</dbReference>
<dbReference type="Gene3D" id="2.40.270.10">
    <property type="entry name" value="DNA-directed RNA polymerase, subunit 2, domain 6"/>
    <property type="match status" value="1"/>
</dbReference>
<dbReference type="Gene3D" id="3.90.1800.10">
    <property type="entry name" value="RNA polymerase alpha subunit dimerisation domain"/>
    <property type="match status" value="1"/>
</dbReference>
<dbReference type="Gene3D" id="3.90.1110.10">
    <property type="entry name" value="RNA polymerase Rpb2, domain 2"/>
    <property type="match status" value="1"/>
</dbReference>
<dbReference type="HAMAP" id="MF_01321">
    <property type="entry name" value="RNApol_bact_RpoB"/>
    <property type="match status" value="1"/>
</dbReference>
<dbReference type="InterPro" id="IPR042107">
    <property type="entry name" value="DNA-dir_RNA_pol_bsu_ext_1_sf"/>
</dbReference>
<dbReference type="InterPro" id="IPR019462">
    <property type="entry name" value="DNA-dir_RNA_pol_bsu_external_1"/>
</dbReference>
<dbReference type="InterPro" id="IPR015712">
    <property type="entry name" value="DNA-dir_RNA_pol_su2"/>
</dbReference>
<dbReference type="InterPro" id="IPR007120">
    <property type="entry name" value="DNA-dir_RNAP_su2_dom"/>
</dbReference>
<dbReference type="InterPro" id="IPR037033">
    <property type="entry name" value="DNA-dir_RNAP_su2_hyb_sf"/>
</dbReference>
<dbReference type="InterPro" id="IPR010243">
    <property type="entry name" value="RNA_pol_bsu_bac"/>
</dbReference>
<dbReference type="InterPro" id="IPR007121">
    <property type="entry name" value="RNA_pol_bsu_CS"/>
</dbReference>
<dbReference type="InterPro" id="IPR007644">
    <property type="entry name" value="RNA_pol_bsu_protrusion"/>
</dbReference>
<dbReference type="InterPro" id="IPR007642">
    <property type="entry name" value="RNA_pol_Rpb2_2"/>
</dbReference>
<dbReference type="InterPro" id="IPR037034">
    <property type="entry name" value="RNA_pol_Rpb2_2_sf"/>
</dbReference>
<dbReference type="InterPro" id="IPR007645">
    <property type="entry name" value="RNA_pol_Rpb2_3"/>
</dbReference>
<dbReference type="InterPro" id="IPR007641">
    <property type="entry name" value="RNA_pol_Rpb2_7"/>
</dbReference>
<dbReference type="InterPro" id="IPR014724">
    <property type="entry name" value="RNA_pol_RPB2_OB-fold"/>
</dbReference>
<dbReference type="NCBIfam" id="NF001616">
    <property type="entry name" value="PRK00405.1"/>
    <property type="match status" value="1"/>
</dbReference>
<dbReference type="NCBIfam" id="TIGR02013">
    <property type="entry name" value="rpoB"/>
    <property type="match status" value="1"/>
</dbReference>
<dbReference type="PANTHER" id="PTHR20856">
    <property type="entry name" value="DNA-DIRECTED RNA POLYMERASE I SUBUNIT 2"/>
    <property type="match status" value="1"/>
</dbReference>
<dbReference type="Pfam" id="PF04563">
    <property type="entry name" value="RNA_pol_Rpb2_1"/>
    <property type="match status" value="1"/>
</dbReference>
<dbReference type="Pfam" id="PF04561">
    <property type="entry name" value="RNA_pol_Rpb2_2"/>
    <property type="match status" value="2"/>
</dbReference>
<dbReference type="Pfam" id="PF04565">
    <property type="entry name" value="RNA_pol_Rpb2_3"/>
    <property type="match status" value="1"/>
</dbReference>
<dbReference type="Pfam" id="PF10385">
    <property type="entry name" value="RNA_pol_Rpb2_45"/>
    <property type="match status" value="1"/>
</dbReference>
<dbReference type="Pfam" id="PF00562">
    <property type="entry name" value="RNA_pol_Rpb2_6"/>
    <property type="match status" value="1"/>
</dbReference>
<dbReference type="Pfam" id="PF04560">
    <property type="entry name" value="RNA_pol_Rpb2_7"/>
    <property type="match status" value="1"/>
</dbReference>
<dbReference type="SUPFAM" id="SSF64484">
    <property type="entry name" value="beta and beta-prime subunits of DNA dependent RNA-polymerase"/>
    <property type="match status" value="1"/>
</dbReference>
<dbReference type="PROSITE" id="PS01166">
    <property type="entry name" value="RNA_POL_BETA"/>
    <property type="match status" value="1"/>
</dbReference>
<gene>
    <name evidence="1" type="primary">rpoB</name>
    <name type="ordered locus">Dde_2997</name>
</gene>